<name>GLPB_SALA4</name>
<feature type="chain" id="PRO_1000133367" description="Anaerobic glycerol-3-phosphate dehydrogenase subunit B">
    <location>
        <begin position="1"/>
        <end position="419"/>
    </location>
</feature>
<accession>B5EYX0</accession>
<reference key="1">
    <citation type="journal article" date="2011" name="J. Bacteriol.">
        <title>Comparative genomics of 28 Salmonella enterica isolates: evidence for CRISPR-mediated adaptive sublineage evolution.</title>
        <authorList>
            <person name="Fricke W.F."/>
            <person name="Mammel M.K."/>
            <person name="McDermott P.F."/>
            <person name="Tartera C."/>
            <person name="White D.G."/>
            <person name="Leclerc J.E."/>
            <person name="Ravel J."/>
            <person name="Cebula T.A."/>
        </authorList>
    </citation>
    <scope>NUCLEOTIDE SEQUENCE [LARGE SCALE GENOMIC DNA]</scope>
    <source>
        <strain>SL483</strain>
    </source>
</reference>
<keyword id="KW-0285">Flavoprotein</keyword>
<keyword id="KW-0288">FMN</keyword>
<keyword id="KW-0560">Oxidoreductase</keyword>
<protein>
    <recommendedName>
        <fullName evidence="1">Anaerobic glycerol-3-phosphate dehydrogenase subunit B</fullName>
        <shortName evidence="1">Anaerobic G-3-P dehydrogenase subunit B</shortName>
        <shortName evidence="1">Anaerobic G3Pdhase B</shortName>
        <ecNumber evidence="1">1.1.5.3</ecNumber>
    </recommendedName>
</protein>
<evidence type="ECO:0000255" key="1">
    <source>
        <dbReference type="HAMAP-Rule" id="MF_00753"/>
    </source>
</evidence>
<comment type="function">
    <text evidence="1">Conversion of glycerol 3-phosphate to dihydroxyacetone. Uses fumarate or nitrate as electron acceptor.</text>
</comment>
<comment type="catalytic activity">
    <reaction evidence="1">
        <text>a quinone + sn-glycerol 3-phosphate = dihydroxyacetone phosphate + a quinol</text>
        <dbReference type="Rhea" id="RHEA:18977"/>
        <dbReference type="ChEBI" id="CHEBI:24646"/>
        <dbReference type="ChEBI" id="CHEBI:57597"/>
        <dbReference type="ChEBI" id="CHEBI:57642"/>
        <dbReference type="ChEBI" id="CHEBI:132124"/>
        <dbReference type="EC" id="1.1.5.3"/>
    </reaction>
</comment>
<comment type="cofactor">
    <cofactor evidence="1">
        <name>FMN</name>
        <dbReference type="ChEBI" id="CHEBI:58210"/>
    </cofactor>
</comment>
<comment type="pathway">
    <text evidence="1">Polyol metabolism; glycerol degradation via glycerol kinase pathway; glycerone phosphate from sn-glycerol 3-phosphate (anaerobic route): step 1/1.</text>
</comment>
<comment type="subunit">
    <text evidence="1">Composed of a catalytic GlpA/B dimer and of membrane bound GlpC.</text>
</comment>
<comment type="similarity">
    <text evidence="1">Belongs to the anaerobic G-3-P dehydrogenase subunit B family.</text>
</comment>
<dbReference type="EC" id="1.1.5.3" evidence="1"/>
<dbReference type="EMBL" id="CP001138">
    <property type="protein sequence ID" value="ACH52936.1"/>
    <property type="molecule type" value="Genomic_DNA"/>
</dbReference>
<dbReference type="RefSeq" id="WP_000667161.1">
    <property type="nucleotide sequence ID" value="NC_011149.1"/>
</dbReference>
<dbReference type="KEGG" id="sea:SeAg_B2421"/>
<dbReference type="HOGENOM" id="CLU_047793_0_0_6"/>
<dbReference type="UniPathway" id="UPA00618">
    <property type="reaction ID" value="UER00673"/>
</dbReference>
<dbReference type="Proteomes" id="UP000008819">
    <property type="component" value="Chromosome"/>
</dbReference>
<dbReference type="GO" id="GO:0009331">
    <property type="term" value="C:glycerol-3-phosphate dehydrogenase (FAD) complex"/>
    <property type="evidence" value="ECO:0007669"/>
    <property type="project" value="InterPro"/>
</dbReference>
<dbReference type="GO" id="GO:0004368">
    <property type="term" value="F:glycerol-3-phosphate dehydrogenase (quinone) activity"/>
    <property type="evidence" value="ECO:0007669"/>
    <property type="project" value="UniProtKB-UniRule"/>
</dbReference>
<dbReference type="GO" id="GO:0019563">
    <property type="term" value="P:glycerol catabolic process"/>
    <property type="evidence" value="ECO:0007669"/>
    <property type="project" value="UniProtKB-UniRule"/>
</dbReference>
<dbReference type="Gene3D" id="3.50.50.60">
    <property type="entry name" value="FAD/NAD(P)-binding domain"/>
    <property type="match status" value="1"/>
</dbReference>
<dbReference type="HAMAP" id="MF_00753">
    <property type="entry name" value="Glycerol3P_GlpB"/>
    <property type="match status" value="1"/>
</dbReference>
<dbReference type="InterPro" id="IPR003953">
    <property type="entry name" value="FAD-dep_OxRdtase_2_FAD-bd"/>
</dbReference>
<dbReference type="InterPro" id="IPR036188">
    <property type="entry name" value="FAD/NAD-bd_sf"/>
</dbReference>
<dbReference type="InterPro" id="IPR009158">
    <property type="entry name" value="G3P_DH_GlpB_su"/>
</dbReference>
<dbReference type="NCBIfam" id="TIGR03378">
    <property type="entry name" value="glycerol3P_GlpB"/>
    <property type="match status" value="1"/>
</dbReference>
<dbReference type="NCBIfam" id="NF003718">
    <property type="entry name" value="PRK05329.1-1"/>
    <property type="match status" value="1"/>
</dbReference>
<dbReference type="NCBIfam" id="NF003719">
    <property type="entry name" value="PRK05329.1-2"/>
    <property type="match status" value="1"/>
</dbReference>
<dbReference type="NCBIfam" id="NF003720">
    <property type="entry name" value="PRK05329.1-3"/>
    <property type="match status" value="1"/>
</dbReference>
<dbReference type="Pfam" id="PF00890">
    <property type="entry name" value="FAD_binding_2"/>
    <property type="match status" value="1"/>
</dbReference>
<dbReference type="PIRSF" id="PIRSF000141">
    <property type="entry name" value="Anaerobic_G3P_dh"/>
    <property type="match status" value="1"/>
</dbReference>
<dbReference type="SUPFAM" id="SSF51905">
    <property type="entry name" value="FAD/NAD(P)-binding domain"/>
    <property type="match status" value="1"/>
</dbReference>
<proteinExistence type="inferred from homology"/>
<organism>
    <name type="scientific">Salmonella agona (strain SL483)</name>
    <dbReference type="NCBI Taxonomy" id="454166"/>
    <lineage>
        <taxon>Bacteria</taxon>
        <taxon>Pseudomonadati</taxon>
        <taxon>Pseudomonadota</taxon>
        <taxon>Gammaproteobacteria</taxon>
        <taxon>Enterobacterales</taxon>
        <taxon>Enterobacteriaceae</taxon>
        <taxon>Salmonella</taxon>
    </lineage>
</organism>
<sequence>MKFDTVIMGGGLAGLLCGLQLQQHGLRCAIVTRGQSALHFSSGSLDLLSTLPDGQPVTDITAGLDALCRQAPEHPYSRLGAQKVLTLAQQAQTLLNASGAQLYGDVQQAHQRVTPLGTLRSTWLSSPEVPVWPLSAQRICVVGVSGLLDFQAHLAAASLRQRDLNVETAEIDLPELDVLRDNPTEFRAVNIARLLDNEEKWPLLYDALSPIATNCDMIIMPACFGLANDTLWRWLNERLPCALTLLPTLPPSVLGIRLHNQLQRQFVRQGGIWMPGDEVKKVTCRRGTVSEIWTRNHADIPLRPRFAVLASGSFFSSGLVAEREGIREPILGLDVQQTATRAEWYQQHFFDPQPWQQFGVVTDDAFRPSLAGNTVENLYAIGSVLAGFDPIAEGCGGGVCAVSALQAAHHIAERAGEQQ</sequence>
<gene>
    <name evidence="1" type="primary">glpB</name>
    <name type="ordered locus">SeAg_B2421</name>
</gene>